<keyword id="KW-0007">Acetylation</keyword>
<keyword id="KW-0024">Alternative initiation</keyword>
<keyword id="KW-0025">Alternative splicing</keyword>
<keyword id="KW-1166">Caveolin-mediated endocytosis of virus by host</keyword>
<keyword id="KW-1170">Fusion of virus membrane with host endosomal membrane</keyword>
<keyword id="KW-1168">Fusion of virus membrane with host membrane</keyword>
<keyword id="KW-0325">Glycoprotein</keyword>
<keyword id="KW-0945">Host-virus interaction</keyword>
<keyword id="KW-0449">Lipoprotein</keyword>
<keyword id="KW-0472">Membrane</keyword>
<keyword id="KW-0519">Myristate</keyword>
<keyword id="KW-0812">Transmembrane</keyword>
<keyword id="KW-1133">Transmembrane helix</keyword>
<keyword id="KW-1161">Viral attachment to host cell</keyword>
<keyword id="KW-0261">Viral envelope protein</keyword>
<keyword id="KW-1162">Viral penetration into host cytoplasm</keyword>
<keyword id="KW-0946">Virion</keyword>
<keyword id="KW-1164">Virus endocytosis by host</keyword>
<keyword id="KW-1160">Virus entry into host cell</keyword>
<reference key="1">
    <citation type="journal article" date="1989" name="Nucleic Acids Res.">
        <title>The nucleotide sequence and reading frames of a mutant hepatitis B virus subtype adr.</title>
        <authorList>
            <person name="Rho H.M."/>
            <person name="Kim K."/>
            <person name="Hyun S.W."/>
            <person name="Kim Y.S."/>
        </authorList>
    </citation>
    <scope>NUCLEOTIDE SEQUENCE [GENOMIC DNA]</scope>
</reference>
<reference key="2">
    <citation type="journal article" date="1996" name="Intervirology">
        <title>Functions of the large hepatitis B virus surface protein in viral particle morphogenesis.</title>
        <authorList>
            <person name="Bruss V."/>
            <person name="Gerhardt E."/>
            <person name="Vieluf K."/>
            <person name="Wunderlich G."/>
        </authorList>
    </citation>
    <scope>REVIEW</scope>
</reference>
<reference key="3">
    <citation type="journal article" date="1998" name="Adv. Exp. Med. Biol.">
        <title>Role of glycan processing in hepatitis B virus envelope protein trafficking.</title>
        <authorList>
            <person name="Block T.M."/>
            <person name="Lu X."/>
            <person name="Mehta A."/>
            <person name="Park J."/>
            <person name="Blumberg B.S."/>
            <person name="Dwek R."/>
        </authorList>
    </citation>
    <scope>REVIEW</scope>
</reference>
<reference key="4">
    <citation type="journal article" date="2004" name="Virus Res.">
        <title>Envelopment of the hepatitis B virus nucleocapsid.</title>
        <authorList>
            <person name="Bruss V."/>
        </authorList>
    </citation>
    <scope>REVIEW</scope>
</reference>
<reference key="5">
    <citation type="journal article" date="2006" name="Cancer Sci.">
        <title>Hepatitis B virus pre-S mutants, endoplasmic reticulum stress and hepatocarcinogenesis.</title>
        <authorList>
            <person name="Wang H.C."/>
            <person name="Huang W."/>
            <person name="Lai M.D."/>
            <person name="Su I.J."/>
        </authorList>
    </citation>
    <scope>REVIEW</scope>
</reference>
<name>HBSAG_HBVC4</name>
<dbReference type="EMBL" id="X14193">
    <property type="protein sequence ID" value="CAA32406.1"/>
    <property type="status" value="ALT_SEQ"/>
    <property type="molecule type" value="Genomic_DNA"/>
</dbReference>
<dbReference type="SMR" id="Q67867"/>
<dbReference type="GlyCosmos" id="Q67867">
    <property type="glycosylation" value="2 sites, No reported glycans"/>
</dbReference>
<dbReference type="ABCD" id="Q67867">
    <property type="antibodies" value="1 sequenced antibody"/>
</dbReference>
<dbReference type="Proteomes" id="UP000007924">
    <property type="component" value="Genome"/>
</dbReference>
<dbReference type="GO" id="GO:0016020">
    <property type="term" value="C:membrane"/>
    <property type="evidence" value="ECO:0007669"/>
    <property type="project" value="UniProtKB-UniRule"/>
</dbReference>
<dbReference type="GO" id="GO:0019031">
    <property type="term" value="C:viral envelope"/>
    <property type="evidence" value="ECO:0007669"/>
    <property type="project" value="UniProtKB-KW"/>
</dbReference>
<dbReference type="GO" id="GO:0055036">
    <property type="term" value="C:virion membrane"/>
    <property type="evidence" value="ECO:0007669"/>
    <property type="project" value="UniProtKB-SubCell"/>
</dbReference>
<dbReference type="GO" id="GO:0075513">
    <property type="term" value="P:caveolin-mediated endocytosis of virus by host cell"/>
    <property type="evidence" value="ECO:0007669"/>
    <property type="project" value="UniProtKB-KW"/>
</dbReference>
<dbReference type="GO" id="GO:0039654">
    <property type="term" value="P:fusion of virus membrane with host endosome membrane"/>
    <property type="evidence" value="ECO:0007669"/>
    <property type="project" value="UniProtKB-KW"/>
</dbReference>
<dbReference type="GO" id="GO:0019062">
    <property type="term" value="P:virion attachment to host cell"/>
    <property type="evidence" value="ECO:0007669"/>
    <property type="project" value="UniProtKB-UniRule"/>
</dbReference>
<dbReference type="HAMAP" id="MF_04075">
    <property type="entry name" value="HBV_HBSAG"/>
    <property type="match status" value="1"/>
</dbReference>
<dbReference type="InterPro" id="IPR000349">
    <property type="entry name" value="HBV_HBSAG"/>
</dbReference>
<dbReference type="Pfam" id="PF00695">
    <property type="entry name" value="vMSA"/>
    <property type="match status" value="1"/>
</dbReference>
<organismHost>
    <name type="scientific">Homo sapiens</name>
    <name type="common">Human</name>
    <dbReference type="NCBI Taxonomy" id="9606"/>
</organismHost>
<organismHost>
    <name type="scientific">Pan troglodytes</name>
    <name type="common">Chimpanzee</name>
    <dbReference type="NCBI Taxonomy" id="9598"/>
</organismHost>
<sequence>MGGWSSKPRQGMGTNLSVPNPLGFFPDHQLDPAFGANSNNPDWDFNPNKDRWPEANQVGAGAFGPGYPPPHGGLLGWSPQAQGILTTVPAAPPPASTNRQSGRQPTPISPPLRDSHPQAMQWNSTTFHQVLLDPRVRGLYFPPGGSSSGTVNPVPTTASPISSISSRTGDPAPNMESTTSGFLGPLLVLQAGFFLLTRILTIPQSLDSWWTSLNFLGGAPTCPGQNSQSPTSNHSPTSCPPICPGYRWMCLRRFIIFLFILLLCLIFLLVLLDYQGMLPVCPLLPGTSTTSTGPCKTCTIPAQGTSMFPSCCCTKPSDGNCTCIPIPSSWAFARFLWEGASVRFSWLSLLVPFVQWFVGLSPTVWLSVIWMMWYWGPSLYNILSPFLPLLPIFFCLWVYI</sequence>
<proteinExistence type="evidence at protein level"/>
<comment type="function">
    <text evidence="3">The large envelope protein exists in two topological conformations, one which is termed 'external' or Le-HBsAg and the other 'internal' or Li-HBsAg. In its external conformation the protein attaches the virus to cell receptors and thereby initiating infection. This interaction determines the species specificity and liver tropism. This attachment induces virion internalization predominantly through caveolin-mediated endocytosis. The large envelope protein also assures fusion between virion membrane and endosomal membrane. In its internal conformation the protein plays a role in virion morphogenesis and mediates the contact with the nucleocapsid like a matrix protein.</text>
</comment>
<comment type="function">
    <text evidence="3">The middle envelope protein plays an important role in the budding of the virion. It is involved in the induction of budding in a nucleocapsid independent way. In this process the majority of envelope proteins bud to form subviral lipoprotein particles of 22 nm of diameter that do not contain a nucleocapsid.</text>
</comment>
<comment type="subunit">
    <molecule>Isoform L</molecule>
    <text evidence="2">In its internal form (Li-HBsAg), interacts with the capsid protein and with the isoform S. Interacts with host chaperone CANX.</text>
</comment>
<comment type="subunit">
    <molecule>Isoform M</molecule>
    <text evidence="2">Associates with host chaperone CANX through its pre-S2 N glycan; this association may be essential for isoform M proper secretion.</text>
</comment>
<comment type="subunit">
    <molecule>Isoform S</molecule>
    <text evidence="2">Interacts with isoform L. Interacts with the antigens of satellite virus HDV (HDVAgs); this interaction is required for encapsidation of HDV genomic RNA.</text>
</comment>
<comment type="subcellular location">
    <subcellularLocation>
        <location evidence="3">Virion membrane</location>
    </subcellularLocation>
</comment>
<comment type="alternative products">
    <event type="alternative splicing"/>
    <event type="alternative initiation"/>
    <isoform>
        <id>Q67867-1</id>
        <name>L</name>
        <name>Large envelope protein</name>
        <name>LHB</name>
        <name>L-HBsAg</name>
        <sequence type="displayed"/>
    </isoform>
    <isoform>
        <id>Q67867-2</id>
        <name>M</name>
        <name>Middle envelope protein</name>
        <name>MHB</name>
        <name>M-HBsAg</name>
        <sequence type="described" ref="VSP_031391"/>
    </isoform>
    <isoform>
        <id>Q67867-3</id>
        <name>S</name>
        <name>Small envelope protein</name>
        <name>SHB</name>
        <name>S-HBsAg</name>
        <sequence type="described" ref="VSP_031390"/>
    </isoform>
</comment>
<comment type="domain">
    <text evidence="3">The large envelope protein is synthesized with the pre-S region at the cytosolic side of the endoplasmic reticulum and, hence will be within the virion after budding. Therefore the pre-S region is not N-glycosylated. Later a post-translational translocation of N-terminal pre-S and TM1 domains occur in about 50% of proteins at the virion surface. These molecules change their topology by an unknown mechanism, resulting in exposure of pre-S region at virion surface. For isoform M in contrast, the pre-S2 region is translocated cotranslationally to the endoplasmic reticulum lumen and is N-glycosylated.</text>
</comment>
<comment type="PTM">
    <text evidence="1 3">Isoform M is N-terminally acetylated by host at a ratio of 90%, and N-glycosylated by host at the pre-S2 region.</text>
</comment>
<comment type="PTM">
    <text evidence="3">Myristoylated.</text>
</comment>
<comment type="biotechnology">
    <text>Systematic vaccination of individuals at risk of exposure to the virus has been the main method of controlling the morbidity and mortality associated with hepatitis B. The first hepatitis B vaccine was manufactured by the purification and inactivation of HBsAg obtained from the plasma of chronic hepatitis B virus carriers. The vaccine is now produced by recombinant DNA techniques and expression of the S isoform in yeast cells. The pre-S region do not seem to induce strong enough antigenic response.</text>
</comment>
<comment type="similarity">
    <text evidence="3">Belongs to the orthohepadnavirus major surface antigen family.</text>
</comment>
<evidence type="ECO:0000250" key="1">
    <source>
        <dbReference type="UniProtKB" id="P03138"/>
    </source>
</evidence>
<evidence type="ECO:0000250" key="2">
    <source>
        <dbReference type="UniProtKB" id="P03141"/>
    </source>
</evidence>
<evidence type="ECO:0000255" key="3">
    <source>
        <dbReference type="HAMAP-Rule" id="MF_04075"/>
    </source>
</evidence>
<evidence type="ECO:0000256" key="4">
    <source>
        <dbReference type="SAM" id="MobiDB-lite"/>
    </source>
</evidence>
<evidence type="ECO:0000305" key="5"/>
<gene>
    <name evidence="3" type="primary">S</name>
</gene>
<organism>
    <name type="scientific">Hepatitis B virus genotype C subtype adr (isolate Korea/Kim/1989)</name>
    <name type="common">HBV-C</name>
    <dbReference type="NCBI Taxonomy" id="31512"/>
    <lineage>
        <taxon>Viruses</taxon>
        <taxon>Riboviria</taxon>
        <taxon>Pararnavirae</taxon>
        <taxon>Artverviricota</taxon>
        <taxon>Revtraviricetes</taxon>
        <taxon>Blubervirales</taxon>
        <taxon>Hepadnaviridae</taxon>
        <taxon>Orthohepadnavirus</taxon>
        <taxon>Hepatitis B virus</taxon>
    </lineage>
</organism>
<accession>Q67867</accession>
<feature type="initiator methionine" description="Removed; by host" evidence="3">
    <location>
        <position position="1"/>
    </location>
</feature>
<feature type="chain" id="PRO_0000319081" description="Large envelope protein" evidence="3">
    <location>
        <begin position="2"/>
        <end position="400"/>
    </location>
</feature>
<feature type="topological domain" description="Intravirion; in internal conformation" evidence="3">
    <location>
        <begin position="2"/>
        <end position="253"/>
    </location>
</feature>
<feature type="topological domain" description="Virion surface; in external conformation" evidence="3">
    <location>
        <begin position="2"/>
        <end position="181"/>
    </location>
</feature>
<feature type="transmembrane region" description="Helical; Name=TM1; Note=In external conformation" evidence="3">
    <location>
        <begin position="182"/>
        <end position="202"/>
    </location>
</feature>
<feature type="topological domain" description="Intravirion; in external conformation" evidence="3">
    <location>
        <begin position="203"/>
        <end position="253"/>
    </location>
</feature>
<feature type="transmembrane region" description="Helical; Name=TM2" evidence="3">
    <location>
        <begin position="254"/>
        <end position="274"/>
    </location>
</feature>
<feature type="topological domain" description="Virion surface" evidence="3">
    <location>
        <begin position="275"/>
        <end position="348"/>
    </location>
</feature>
<feature type="transmembrane region" description="Helical" evidence="3">
    <location>
        <begin position="349"/>
        <end position="369"/>
    </location>
</feature>
<feature type="topological domain" description="Intravirion" evidence="3">
    <location>
        <begin position="370"/>
        <end position="375"/>
    </location>
</feature>
<feature type="transmembrane region" description="Helical; Name=TM3" evidence="3">
    <location>
        <begin position="376"/>
        <end position="398"/>
    </location>
</feature>
<feature type="topological domain" description="Virion surface" evidence="3">
    <location>
        <begin position="399"/>
        <end position="400"/>
    </location>
</feature>
<feature type="region of interest" description="Disordered" evidence="4">
    <location>
        <begin position="1"/>
        <end position="64"/>
    </location>
</feature>
<feature type="region of interest" description="Pre-S" evidence="3">
    <location>
        <begin position="2"/>
        <end position="174"/>
    </location>
</feature>
<feature type="region of interest" description="Pre-S1" evidence="3">
    <location>
        <begin position="2"/>
        <end position="119"/>
    </location>
</feature>
<feature type="region of interest" description="Disordered" evidence="4">
    <location>
        <begin position="85"/>
        <end position="118"/>
    </location>
</feature>
<feature type="region of interest" description="Pre-S2" evidence="3">
    <location>
        <begin position="120"/>
        <end position="174"/>
    </location>
</feature>
<feature type="region of interest" description="Disordered" evidence="4">
    <location>
        <begin position="143"/>
        <end position="174"/>
    </location>
</feature>
<feature type="compositionally biased region" description="Polar residues" evidence="4">
    <location>
        <begin position="96"/>
        <end position="106"/>
    </location>
</feature>
<feature type="compositionally biased region" description="Low complexity" evidence="4">
    <location>
        <begin position="155"/>
        <end position="166"/>
    </location>
</feature>
<feature type="lipid moiety-binding region" description="N-myristoyl glycine; by host" evidence="3">
    <location>
        <position position="2"/>
    </location>
</feature>
<feature type="glycosylation site" description="N-linked (GlcNAc...) asparagine; by host" evidence="3">
    <location>
        <position position="320"/>
    </location>
</feature>
<feature type="splice variant" id="VSP_031390" description="In isoform S." evidence="5">
    <location>
        <begin position="1"/>
        <end position="174"/>
    </location>
</feature>
<feature type="splice variant" id="VSP_031391" description="In isoform M." evidence="5">
    <location>
        <begin position="1"/>
        <end position="119"/>
    </location>
</feature>
<feature type="modified residue" description="N-acetylmethionine" evidence="5">
    <location sequence="Q67867-2">
        <position position="1"/>
    </location>
</feature>
<feature type="glycosylation site" description="N-linked (GlcNAc...) asparagine" evidence="5">
    <location sequence="Q67867-2">
        <position position="4"/>
    </location>
</feature>
<protein>
    <recommendedName>
        <fullName evidence="3">Large envelope protein</fullName>
    </recommendedName>
    <alternativeName>
        <fullName evidence="3">L glycoprotein</fullName>
    </alternativeName>
    <alternativeName>
        <fullName evidence="3">L-HBsAg</fullName>
        <shortName evidence="3">LHB</shortName>
    </alternativeName>
    <alternativeName>
        <fullName evidence="3">Large S protein</fullName>
    </alternativeName>
    <alternativeName>
        <fullName evidence="3">Large surface protein</fullName>
    </alternativeName>
    <alternativeName>
        <fullName evidence="3">Major surface antigen</fullName>
    </alternativeName>
</protein>